<organism>
    <name type="scientific">Saccharomyces cerevisiae (strain ATCC 204508 / S288c)</name>
    <name type="common">Baker's yeast</name>
    <dbReference type="NCBI Taxonomy" id="559292"/>
    <lineage>
        <taxon>Eukaryota</taxon>
        <taxon>Fungi</taxon>
        <taxon>Dikarya</taxon>
        <taxon>Ascomycota</taxon>
        <taxon>Saccharomycotina</taxon>
        <taxon>Saccharomycetes</taxon>
        <taxon>Saccharomycetales</taxon>
        <taxon>Saccharomycetaceae</taxon>
        <taxon>Saccharomyces</taxon>
    </lineage>
</organism>
<sequence>MIRYSSRNRSAREVPVRRHPIFQVQHWKTSNEHSYHYSLCITFRSNPRTLTFSKITVKNDGRNFSQKFFFSFLLKSFLRWINCSLPFEIWRRSKSISTHLR</sequence>
<reference key="1">
    <citation type="journal article" date="1997" name="Nature">
        <title>The nucleotide sequence of Saccharomyces cerevisiae chromosome XII.</title>
        <authorList>
            <person name="Johnston M."/>
            <person name="Hillier L.W."/>
            <person name="Riles L."/>
            <person name="Albermann K."/>
            <person name="Andre B."/>
            <person name="Ansorge W."/>
            <person name="Benes V."/>
            <person name="Brueckner M."/>
            <person name="Delius H."/>
            <person name="Dubois E."/>
            <person name="Duesterhoeft A."/>
            <person name="Entian K.-D."/>
            <person name="Floeth M."/>
            <person name="Goffeau A."/>
            <person name="Hebling U."/>
            <person name="Heumann K."/>
            <person name="Heuss-Neitzel D."/>
            <person name="Hilbert H."/>
            <person name="Hilger F."/>
            <person name="Kleine K."/>
            <person name="Koetter P."/>
            <person name="Louis E.J."/>
            <person name="Messenguy F."/>
            <person name="Mewes H.-W."/>
            <person name="Miosga T."/>
            <person name="Moestl D."/>
            <person name="Mueller-Auer S."/>
            <person name="Nentwich U."/>
            <person name="Obermaier B."/>
            <person name="Piravandi E."/>
            <person name="Pohl T.M."/>
            <person name="Portetelle D."/>
            <person name="Purnelle B."/>
            <person name="Rechmann S."/>
            <person name="Rieger M."/>
            <person name="Rinke M."/>
            <person name="Rose M."/>
            <person name="Scharfe M."/>
            <person name="Scherens B."/>
            <person name="Scholler P."/>
            <person name="Schwager C."/>
            <person name="Schwarz S."/>
            <person name="Underwood A.P."/>
            <person name="Urrestarazu L.A."/>
            <person name="Vandenbol M."/>
            <person name="Verhasselt P."/>
            <person name="Vierendeels F."/>
            <person name="Voet M."/>
            <person name="Volckaert G."/>
            <person name="Voss H."/>
            <person name="Wambutt R."/>
            <person name="Wedler E."/>
            <person name="Wedler H."/>
            <person name="Zimmermann F.K."/>
            <person name="Zollner A."/>
            <person name="Hani J."/>
            <person name="Hoheisel J.D."/>
        </authorList>
    </citation>
    <scope>NUCLEOTIDE SEQUENCE [LARGE SCALE GENOMIC DNA]</scope>
    <source>
        <strain>ATCC 204508 / S288c</strain>
    </source>
</reference>
<reference key="2">
    <citation type="journal article" date="2014" name="G3 (Bethesda)">
        <title>The reference genome sequence of Saccharomyces cerevisiae: Then and now.</title>
        <authorList>
            <person name="Engel S.R."/>
            <person name="Dietrich F.S."/>
            <person name="Fisk D.G."/>
            <person name="Binkley G."/>
            <person name="Balakrishnan R."/>
            <person name="Costanzo M.C."/>
            <person name="Dwight S.S."/>
            <person name="Hitz B.C."/>
            <person name="Karra K."/>
            <person name="Nash R.S."/>
            <person name="Weng S."/>
            <person name="Wong E.D."/>
            <person name="Lloyd P."/>
            <person name="Skrzypek M.S."/>
            <person name="Miyasato S.R."/>
            <person name="Simison M."/>
            <person name="Cherry J.M."/>
        </authorList>
    </citation>
    <scope>GENOME REANNOTATION</scope>
    <source>
        <strain>ATCC 204508 / S288c</strain>
    </source>
</reference>
<reference key="3">
    <citation type="journal article" date="2007" name="Genome Res.">
        <title>Approaching a complete repository of sequence-verified protein-encoding clones for Saccharomyces cerevisiae.</title>
        <authorList>
            <person name="Hu Y."/>
            <person name="Rolfs A."/>
            <person name="Bhullar B."/>
            <person name="Murthy T.V.S."/>
            <person name="Zhu C."/>
            <person name="Berger M.F."/>
            <person name="Camargo A.A."/>
            <person name="Kelley F."/>
            <person name="McCarron S."/>
            <person name="Jepson D."/>
            <person name="Richardson A."/>
            <person name="Raphael J."/>
            <person name="Moreira D."/>
            <person name="Taycher E."/>
            <person name="Zuo D."/>
            <person name="Mohr S."/>
            <person name="Kane M.F."/>
            <person name="Williamson J."/>
            <person name="Simpson A.J.G."/>
            <person name="Bulyk M.L."/>
            <person name="Harlow E."/>
            <person name="Marsischky G."/>
            <person name="Kolodner R.D."/>
            <person name="LaBaer J."/>
        </authorList>
    </citation>
    <scope>NUCLEOTIDE SEQUENCE [GENOMIC DNA]</scope>
    <source>
        <strain>ATCC 204508 / S288c</strain>
    </source>
</reference>
<proteinExistence type="uncertain"/>
<feature type="chain" id="PRO_0000299643" description="Putative uncharacterized protein YLR366W">
    <location>
        <begin position="1"/>
        <end position="101"/>
    </location>
</feature>
<protein>
    <recommendedName>
        <fullName>Putative uncharacterized protein YLR366W</fullName>
    </recommendedName>
</protein>
<name>YL366_YEAST</name>
<comment type="miscellaneous">
    <text evidence="1">Almost completely overlaps YLR364C-A.</text>
</comment>
<comment type="caution">
    <text evidence="2">Product of a dubious gene prediction unlikely to encode a functional protein. Because of that it is not part of the S.cerevisiae S288c complete/reference proteome set.</text>
</comment>
<evidence type="ECO:0000305" key="1"/>
<evidence type="ECO:0000305" key="2">
    <source>
    </source>
</evidence>
<dbReference type="EMBL" id="U19103">
    <property type="protein sequence ID" value="AAB67568.1"/>
    <property type="molecule type" value="Genomic_DNA"/>
</dbReference>
<dbReference type="EMBL" id="AY558225">
    <property type="protein sequence ID" value="AAS56551.1"/>
    <property type="molecule type" value="Genomic_DNA"/>
</dbReference>
<dbReference type="PIR" id="S51384">
    <property type="entry name" value="S51384"/>
</dbReference>
<dbReference type="DIP" id="DIP-2141N"/>
<dbReference type="IntAct" id="Q7LIF1">
    <property type="interactions" value="1"/>
</dbReference>
<dbReference type="STRING" id="4932.YLR366W"/>
<dbReference type="PaxDb" id="4932-YLR366W"/>
<dbReference type="EnsemblFungi" id="YLR366W_mRNA">
    <property type="protein sequence ID" value="YLR366W"/>
    <property type="gene ID" value="YLR366W"/>
</dbReference>
<dbReference type="AGR" id="SGD:S000004358"/>
<dbReference type="SGD" id="S000004358">
    <property type="gene designation" value="YLR366W"/>
</dbReference>
<dbReference type="HOGENOM" id="CLU_2293905_0_0_1"/>
<dbReference type="ChiTaRS" id="YLR366W">
    <property type="organism name" value="yeast"/>
</dbReference>
<accession>Q7LIF1</accession>
<gene>
    <name type="ordered locus">YLR366W</name>
    <name type="ORF">L8039.7</name>
</gene>